<gene>
    <name evidence="1" type="primary">folE2-1</name>
    <name type="ordered locus">Bcep18194_B0317</name>
</gene>
<protein>
    <recommendedName>
        <fullName evidence="1">GTP cyclohydrolase FolE2 1</fullName>
        <ecNumber evidence="1">3.5.4.16</ecNumber>
    </recommendedName>
</protein>
<comment type="function">
    <text evidence="1">Converts GTP to 7,8-dihydroneopterin triphosphate.</text>
</comment>
<comment type="catalytic activity">
    <reaction evidence="1">
        <text>GTP + H2O = 7,8-dihydroneopterin 3'-triphosphate + formate + H(+)</text>
        <dbReference type="Rhea" id="RHEA:17473"/>
        <dbReference type="ChEBI" id="CHEBI:15377"/>
        <dbReference type="ChEBI" id="CHEBI:15378"/>
        <dbReference type="ChEBI" id="CHEBI:15740"/>
        <dbReference type="ChEBI" id="CHEBI:37565"/>
        <dbReference type="ChEBI" id="CHEBI:58462"/>
        <dbReference type="EC" id="3.5.4.16"/>
    </reaction>
</comment>
<comment type="pathway">
    <text evidence="1">Cofactor biosynthesis; 7,8-dihydroneopterin triphosphate biosynthesis; 7,8-dihydroneopterin triphosphate from GTP: step 1/1.</text>
</comment>
<comment type="similarity">
    <text evidence="1">Belongs to the GTP cyclohydrolase IV family.</text>
</comment>
<keyword id="KW-0378">Hydrolase</keyword>
<accession>Q39AS8</accession>
<organism>
    <name type="scientific">Burkholderia lata (strain ATCC 17760 / DSM 23089 / LMG 22485 / NCIMB 9086 / R18194 / 383)</name>
    <dbReference type="NCBI Taxonomy" id="482957"/>
    <lineage>
        <taxon>Bacteria</taxon>
        <taxon>Pseudomonadati</taxon>
        <taxon>Pseudomonadota</taxon>
        <taxon>Betaproteobacteria</taxon>
        <taxon>Burkholderiales</taxon>
        <taxon>Burkholderiaceae</taxon>
        <taxon>Burkholderia</taxon>
        <taxon>Burkholderia cepacia complex</taxon>
    </lineage>
</organism>
<evidence type="ECO:0000255" key="1">
    <source>
        <dbReference type="HAMAP-Rule" id="MF_01527"/>
    </source>
</evidence>
<sequence length="316" mass="33976">MEKALHRISSMNAPLPDISLTDAAPGGRPLEWVGMQGIDLPVAVAEPGCRRDVHARADVQVDLPAPHVKGIHMSRLYRLLDGLGDGTALSPAGLQHVLHAMVDSHRDCDTRSARLRLRFDLLARRAALVTDGLAGWKAYPVRIDATLSGARFELRAQVTVVYSSTCPCSAALSRHWVEQAFLAAFGHDDRVEPAAVAAWLKRHATAATPHSQRSEAVVSVALPADGATLGLIDLIDRIEHALGTPVQTAVKRADEQAFAVLNGGNLMFVEDAARRVQAALDGHHANPRVHVRHLESLHPHDAVAWAAPVREGADAC</sequence>
<name>GCH41_BURL3</name>
<proteinExistence type="inferred from homology"/>
<dbReference type="EC" id="3.5.4.16" evidence="1"/>
<dbReference type="EMBL" id="CP000152">
    <property type="protein sequence ID" value="ABB10433.1"/>
    <property type="molecule type" value="Genomic_DNA"/>
</dbReference>
<dbReference type="SMR" id="Q39AS8"/>
<dbReference type="KEGG" id="bur:Bcep18194_B0317"/>
<dbReference type="PATRIC" id="fig|482957.22.peg.3901"/>
<dbReference type="HOGENOM" id="CLU_062816_0_0_4"/>
<dbReference type="UniPathway" id="UPA00848">
    <property type="reaction ID" value="UER00151"/>
</dbReference>
<dbReference type="Proteomes" id="UP000002705">
    <property type="component" value="Chromosome 2"/>
</dbReference>
<dbReference type="GO" id="GO:0003934">
    <property type="term" value="F:GTP cyclohydrolase I activity"/>
    <property type="evidence" value="ECO:0007669"/>
    <property type="project" value="UniProtKB-UniRule"/>
</dbReference>
<dbReference type="GO" id="GO:0046654">
    <property type="term" value="P:tetrahydrofolate biosynthetic process"/>
    <property type="evidence" value="ECO:0007669"/>
    <property type="project" value="UniProtKB-UniRule"/>
</dbReference>
<dbReference type="Gene3D" id="3.10.270.10">
    <property type="entry name" value="Urate Oxidase"/>
    <property type="match status" value="1"/>
</dbReference>
<dbReference type="HAMAP" id="MF_01527_B">
    <property type="entry name" value="GTP_cyclohydrol_B"/>
    <property type="match status" value="1"/>
</dbReference>
<dbReference type="InterPro" id="IPR022838">
    <property type="entry name" value="GTP_cyclohydrolase_FolE2"/>
</dbReference>
<dbReference type="InterPro" id="IPR003801">
    <property type="entry name" value="GTP_cyclohydrolase_FolE2/MptA"/>
</dbReference>
<dbReference type="NCBIfam" id="NF010200">
    <property type="entry name" value="PRK13674.1-1"/>
    <property type="match status" value="1"/>
</dbReference>
<dbReference type="PANTHER" id="PTHR36445">
    <property type="entry name" value="GTP CYCLOHYDROLASE MPTA"/>
    <property type="match status" value="1"/>
</dbReference>
<dbReference type="PANTHER" id="PTHR36445:SF1">
    <property type="entry name" value="GTP CYCLOHYDROLASE MPTA"/>
    <property type="match status" value="1"/>
</dbReference>
<dbReference type="Pfam" id="PF02649">
    <property type="entry name" value="GCHY-1"/>
    <property type="match status" value="1"/>
</dbReference>
<feature type="chain" id="PRO_0000289482" description="GTP cyclohydrolase FolE2 1">
    <location>
        <begin position="1"/>
        <end position="316"/>
    </location>
</feature>
<feature type="site" description="May be catalytically important" evidence="1">
    <location>
        <position position="166"/>
    </location>
</feature>
<reference key="1">
    <citation type="submission" date="2005-10" db="EMBL/GenBank/DDBJ databases">
        <title>Complete sequence of chromosome 2 of Burkholderia sp. 383.</title>
        <authorList>
            <consortium name="US DOE Joint Genome Institute"/>
            <person name="Copeland A."/>
            <person name="Lucas S."/>
            <person name="Lapidus A."/>
            <person name="Barry K."/>
            <person name="Detter J.C."/>
            <person name="Glavina T."/>
            <person name="Hammon N."/>
            <person name="Israni S."/>
            <person name="Pitluck S."/>
            <person name="Chain P."/>
            <person name="Malfatti S."/>
            <person name="Shin M."/>
            <person name="Vergez L."/>
            <person name="Schmutz J."/>
            <person name="Larimer F."/>
            <person name="Land M."/>
            <person name="Kyrpides N."/>
            <person name="Lykidis A."/>
            <person name="Richardson P."/>
        </authorList>
    </citation>
    <scope>NUCLEOTIDE SEQUENCE [LARGE SCALE GENOMIC DNA]</scope>
    <source>
        <strain>ATCC 17760 / DSM 23089 / LMG 22485 / NCIMB 9086 / R18194 / 383</strain>
    </source>
</reference>